<dbReference type="EMBL" id="AE017243">
    <property type="protein sequence ID" value="AAZ44265.2"/>
    <property type="molecule type" value="Genomic_DNA"/>
</dbReference>
<dbReference type="RefSeq" id="WP_193325078.1">
    <property type="nucleotide sequence ID" value="NC_007295.1"/>
</dbReference>
<dbReference type="SMR" id="Q4AAF6"/>
<dbReference type="GeneID" id="41334477"/>
<dbReference type="KEGG" id="mhj:MHJ_0174"/>
<dbReference type="eggNOG" id="COG0256">
    <property type="taxonomic scope" value="Bacteria"/>
</dbReference>
<dbReference type="HOGENOM" id="CLU_098841_0_1_14"/>
<dbReference type="Proteomes" id="UP000000548">
    <property type="component" value="Chromosome"/>
</dbReference>
<dbReference type="GO" id="GO:1990904">
    <property type="term" value="C:ribonucleoprotein complex"/>
    <property type="evidence" value="ECO:0007669"/>
    <property type="project" value="UniProtKB-KW"/>
</dbReference>
<dbReference type="GO" id="GO:0005840">
    <property type="term" value="C:ribosome"/>
    <property type="evidence" value="ECO:0007669"/>
    <property type="project" value="UniProtKB-KW"/>
</dbReference>
<dbReference type="GO" id="GO:0019843">
    <property type="term" value="F:rRNA binding"/>
    <property type="evidence" value="ECO:0007669"/>
    <property type="project" value="UniProtKB-UniRule"/>
</dbReference>
<dbReference type="GO" id="GO:0003735">
    <property type="term" value="F:structural constituent of ribosome"/>
    <property type="evidence" value="ECO:0007669"/>
    <property type="project" value="InterPro"/>
</dbReference>
<dbReference type="GO" id="GO:0006412">
    <property type="term" value="P:translation"/>
    <property type="evidence" value="ECO:0007669"/>
    <property type="project" value="UniProtKB-UniRule"/>
</dbReference>
<dbReference type="CDD" id="cd00432">
    <property type="entry name" value="Ribosomal_L18_L5e"/>
    <property type="match status" value="1"/>
</dbReference>
<dbReference type="Gene3D" id="3.30.420.100">
    <property type="match status" value="1"/>
</dbReference>
<dbReference type="HAMAP" id="MF_01337_B">
    <property type="entry name" value="Ribosomal_uL18_B"/>
    <property type="match status" value="1"/>
</dbReference>
<dbReference type="InterPro" id="IPR004389">
    <property type="entry name" value="Ribosomal_uL18_bac-type"/>
</dbReference>
<dbReference type="InterPro" id="IPR005484">
    <property type="entry name" value="Ribosomal_uL18_bac/euk"/>
</dbReference>
<dbReference type="NCBIfam" id="TIGR00060">
    <property type="entry name" value="L18_bact"/>
    <property type="match status" value="1"/>
</dbReference>
<dbReference type="Pfam" id="PF00861">
    <property type="entry name" value="Ribosomal_L18p"/>
    <property type="match status" value="1"/>
</dbReference>
<dbReference type="SUPFAM" id="SSF53137">
    <property type="entry name" value="Translational machinery components"/>
    <property type="match status" value="1"/>
</dbReference>
<gene>
    <name evidence="1" type="primary">rplR</name>
    <name type="ordered locus">MHJ_0174</name>
</gene>
<reference key="1">
    <citation type="journal article" date="2005" name="J. Bacteriol.">
        <title>Swine and poultry pathogens: the complete genome sequences of two strains of Mycoplasma hyopneumoniae and a strain of Mycoplasma synoviae.</title>
        <authorList>
            <person name="Vasconcelos A.T.R."/>
            <person name="Ferreira H.B."/>
            <person name="Bizarro C.V."/>
            <person name="Bonatto S.L."/>
            <person name="Carvalho M.O."/>
            <person name="Pinto P.M."/>
            <person name="Almeida D.F."/>
            <person name="Almeida L.G.P."/>
            <person name="Almeida R."/>
            <person name="Alves-Junior L."/>
            <person name="Assuncao E.N."/>
            <person name="Azevedo V.A.C."/>
            <person name="Bogo M.R."/>
            <person name="Brigido M.M."/>
            <person name="Brocchi M."/>
            <person name="Burity H.A."/>
            <person name="Camargo A.A."/>
            <person name="Camargo S.S."/>
            <person name="Carepo M.S."/>
            <person name="Carraro D.M."/>
            <person name="de Mattos Cascardo J.C."/>
            <person name="Castro L.A."/>
            <person name="Cavalcanti G."/>
            <person name="Chemale G."/>
            <person name="Collevatti R.G."/>
            <person name="Cunha C.W."/>
            <person name="Dallagiovanna B."/>
            <person name="Dambros B.P."/>
            <person name="Dellagostin O.A."/>
            <person name="Falcao C."/>
            <person name="Fantinatti-Garboggini F."/>
            <person name="Felipe M.S.S."/>
            <person name="Fiorentin L."/>
            <person name="Franco G.R."/>
            <person name="Freitas N.S.A."/>
            <person name="Frias D."/>
            <person name="Grangeiro T.B."/>
            <person name="Grisard E.C."/>
            <person name="Guimaraes C.T."/>
            <person name="Hungria M."/>
            <person name="Jardim S.N."/>
            <person name="Krieger M.A."/>
            <person name="Laurino J.P."/>
            <person name="Lima L.F.A."/>
            <person name="Lopes M.I."/>
            <person name="Loreto E.L.S."/>
            <person name="Madeira H.M.F."/>
            <person name="Manfio G.P."/>
            <person name="Maranhao A.Q."/>
            <person name="Martinkovics C.T."/>
            <person name="Medeiros S.R.B."/>
            <person name="Moreira M.A.M."/>
            <person name="Neiva M."/>
            <person name="Ramalho-Neto C.E."/>
            <person name="Nicolas M.F."/>
            <person name="Oliveira S.C."/>
            <person name="Paixao R.F.C."/>
            <person name="Pedrosa F.O."/>
            <person name="Pena S.D.J."/>
            <person name="Pereira M."/>
            <person name="Pereira-Ferrari L."/>
            <person name="Piffer I."/>
            <person name="Pinto L.S."/>
            <person name="Potrich D.P."/>
            <person name="Salim A.C.M."/>
            <person name="Santos F.R."/>
            <person name="Schmitt R."/>
            <person name="Schneider M.P.C."/>
            <person name="Schrank A."/>
            <person name="Schrank I.S."/>
            <person name="Schuck A.F."/>
            <person name="Seuanez H.N."/>
            <person name="Silva D.W."/>
            <person name="Silva R."/>
            <person name="Silva S.C."/>
            <person name="Soares C.M.A."/>
            <person name="Souza K.R.L."/>
            <person name="Souza R.C."/>
            <person name="Staats C.C."/>
            <person name="Steffens M.B.R."/>
            <person name="Teixeira S.M.R."/>
            <person name="Urmenyi T.P."/>
            <person name="Vainstein M.H."/>
            <person name="Zuccherato L.W."/>
            <person name="Simpson A.J.G."/>
            <person name="Zaha A."/>
        </authorList>
    </citation>
    <scope>NUCLEOTIDE SEQUENCE [LARGE SCALE GENOMIC DNA]</scope>
    <source>
        <strain>J / ATCC 25934 / NCTC 10110</strain>
    </source>
</reference>
<sequence length="121" mass="14269">MQKSRNYYRKAKHVRILKKLKSNREDKQKYRIGIYKSLRNFYAYIFDPWKNKVITSVSTLDKSNGYKGNIVSASSLAPDLYKKMKKLNLENESYIFDRGGYLFHGRVKAFANALRDQGVKF</sequence>
<protein>
    <recommendedName>
        <fullName evidence="1">Large ribosomal subunit protein uL18</fullName>
    </recommendedName>
    <alternativeName>
        <fullName evidence="2">50S ribosomal protein L18</fullName>
    </alternativeName>
</protein>
<organism>
    <name type="scientific">Mesomycoplasma hyopneumoniae (strain J / ATCC 25934 / NCTC 10110)</name>
    <name type="common">Mycoplasma hyopneumoniae</name>
    <dbReference type="NCBI Taxonomy" id="262719"/>
    <lineage>
        <taxon>Bacteria</taxon>
        <taxon>Bacillati</taxon>
        <taxon>Mycoplasmatota</taxon>
        <taxon>Mycoplasmoidales</taxon>
        <taxon>Metamycoplasmataceae</taxon>
        <taxon>Mesomycoplasma</taxon>
    </lineage>
</organism>
<name>RL18_MESHJ</name>
<evidence type="ECO:0000255" key="1">
    <source>
        <dbReference type="HAMAP-Rule" id="MF_01337"/>
    </source>
</evidence>
<evidence type="ECO:0000305" key="2"/>
<proteinExistence type="inferred from homology"/>
<accession>Q4AAF6</accession>
<comment type="function">
    <text evidence="1">This is one of the proteins that bind and probably mediate the attachment of the 5S RNA into the large ribosomal subunit, where it forms part of the central protuberance.</text>
</comment>
<comment type="subunit">
    <text evidence="1">Part of the 50S ribosomal subunit; part of the 5S rRNA/L5/L18/L25 subcomplex. Contacts the 5S and 23S rRNAs.</text>
</comment>
<comment type="similarity">
    <text evidence="1">Belongs to the universal ribosomal protein uL18 family.</text>
</comment>
<feature type="chain" id="PRO_0000251331" description="Large ribosomal subunit protein uL18">
    <location>
        <begin position="1"/>
        <end position="121"/>
    </location>
</feature>
<keyword id="KW-0687">Ribonucleoprotein</keyword>
<keyword id="KW-0689">Ribosomal protein</keyword>
<keyword id="KW-0694">RNA-binding</keyword>
<keyword id="KW-0699">rRNA-binding</keyword>